<evidence type="ECO:0000255" key="1">
    <source>
        <dbReference type="HAMAP-Rule" id="MF_01134"/>
    </source>
</evidence>
<evidence type="ECO:0000269" key="2">
    <source>
    </source>
</evidence>
<evidence type="ECO:0000269" key="3">
    <source>
    </source>
</evidence>
<evidence type="ECO:0007829" key="4">
    <source>
        <dbReference type="PDB" id="9C0S"/>
    </source>
</evidence>
<evidence type="ECO:0007829" key="5">
    <source>
        <dbReference type="PDB" id="9C0T"/>
    </source>
</evidence>
<gene>
    <name type="primary">cdhB2</name>
</gene>
<name>ACDE2_METTE</name>
<protein>
    <recommendedName>
        <fullName evidence="1">Acetyl-CoA decarbonylase/synthase complex subunit epsilon 2</fullName>
        <shortName evidence="1">ACDS complex subunit epsilon 2</shortName>
    </recommendedName>
    <alternativeName>
        <fullName evidence="1">ACDS complex carbon monoxide dehydrogenase subunit epsilon 2</fullName>
        <shortName evidence="1">ACDS CODH subunit epsilon 2</shortName>
    </alternativeName>
</protein>
<reference key="1">
    <citation type="journal article" date="2003" name="J. Biol. Chem.">
        <title>Nickel in subunit beta of the acetyl-CoA decarbonylase/synthase multienzyme complex in methanogens. Catalytic properties and evidence for a binuclear Ni-Ni site.</title>
        <authorList>
            <person name="Gencic S."/>
            <person name="Grahame D.A."/>
        </authorList>
    </citation>
    <scope>NUCLEOTIDE SEQUENCE [GENOMIC DNA]</scope>
    <source>
        <strain>ATCC 43570 / DSM 1825 / OCM 12 / TM-1</strain>
    </source>
</reference>
<reference key="2">
    <citation type="journal article" date="1999" name="J. Struct. Biol.">
        <title>Structure of the Ni/Fe-S protein subcomponent of the acetyl-CoA decarbonylase/synthase complex from Methanosarcina thermophila at 26-A resolution.</title>
        <authorList>
            <person name="Kocsis E."/>
            <person name="Kessel M."/>
            <person name="DeMoll E."/>
            <person name="Grahame D.A."/>
        </authorList>
    </citation>
    <scope>ELECTRON MICROSCOPY OF ALPHA-EPSILON COMPLEX</scope>
</reference>
<reference key="3">
    <citation type="journal article" date="2003" name="Acta Crystallogr. D">
        <title>Crystallization and preliminary X-ray data of the alpha2epsilon2 subcomponent of the acetyl-CoA decarbonylase/synthase multienzyme complex from Methanosarcina thermophila.</title>
        <authorList>
            <person name="Balbo P."/>
            <person name="Oliveira M."/>
        </authorList>
    </citation>
    <scope>CRYSTALLIZATION</scope>
</reference>
<dbReference type="EMBL" id="AF173830">
    <property type="protein sequence ID" value="AAG53711.1"/>
    <property type="molecule type" value="Genomic_DNA"/>
</dbReference>
<dbReference type="PDB" id="9C0Q">
    <property type="method" value="EM"/>
    <property type="resolution" value="3.30 A"/>
    <property type="chains" value="C/D=1-170"/>
</dbReference>
<dbReference type="PDB" id="9C0R">
    <property type="method" value="EM"/>
    <property type="resolution" value="2.80 A"/>
    <property type="chains" value="C/D=1-170"/>
</dbReference>
<dbReference type="PDB" id="9C0S">
    <property type="method" value="EM"/>
    <property type="resolution" value="3.20 A"/>
    <property type="chains" value="C/D=1-170"/>
</dbReference>
<dbReference type="PDB" id="9C0T">
    <property type="method" value="EM"/>
    <property type="resolution" value="3.20 A"/>
    <property type="chains" value="C/D=1-170"/>
</dbReference>
<dbReference type="PDBsum" id="9C0Q"/>
<dbReference type="PDBsum" id="9C0R"/>
<dbReference type="PDBsum" id="9C0S"/>
<dbReference type="PDBsum" id="9C0T"/>
<dbReference type="EMDB" id="EMD-45089"/>
<dbReference type="EMDB" id="EMD-45090"/>
<dbReference type="EMDB" id="EMD-45091"/>
<dbReference type="EMDB" id="EMD-45092"/>
<dbReference type="SMR" id="Q9C4Z3"/>
<dbReference type="UniPathway" id="UPA00642"/>
<dbReference type="GO" id="GO:0043885">
    <property type="term" value="F:anaerobic carbon-monoxide dehydrogenase activity"/>
    <property type="evidence" value="ECO:0000314"/>
    <property type="project" value="MENGO"/>
</dbReference>
<dbReference type="GO" id="GO:0019385">
    <property type="term" value="P:methanogenesis, from acetate"/>
    <property type="evidence" value="ECO:0007669"/>
    <property type="project" value="UniProtKB-UniRule"/>
</dbReference>
<dbReference type="FunFam" id="3.40.50.1220:FF:000057">
    <property type="entry name" value="Acetyl-CoA decarbonylase/synthase complex subunit epsilon"/>
    <property type="match status" value="1"/>
</dbReference>
<dbReference type="Gene3D" id="3.40.50.1220">
    <property type="entry name" value="TPP-binding domain"/>
    <property type="match status" value="1"/>
</dbReference>
<dbReference type="HAMAP" id="MF_01134">
    <property type="entry name" value="CdhB"/>
    <property type="match status" value="1"/>
</dbReference>
<dbReference type="InterPro" id="IPR003704">
    <property type="entry name" value="CdhB"/>
</dbReference>
<dbReference type="InterPro" id="IPR029035">
    <property type="entry name" value="DHS-like_NAD/FAD-binding_dom"/>
</dbReference>
<dbReference type="NCBIfam" id="TIGR00315">
    <property type="entry name" value="cdhB"/>
    <property type="match status" value="1"/>
</dbReference>
<dbReference type="Pfam" id="PF02552">
    <property type="entry name" value="CO_dh"/>
    <property type="match status" value="1"/>
</dbReference>
<dbReference type="PIRSF" id="PIRSF006035">
    <property type="entry name" value="CO_dh_b_ACDS_e"/>
    <property type="match status" value="1"/>
</dbReference>
<dbReference type="SUPFAM" id="SSF52467">
    <property type="entry name" value="DHS-like NAD/FAD-binding domain"/>
    <property type="match status" value="1"/>
</dbReference>
<proteinExistence type="evidence at protein level"/>
<feature type="chain" id="PRO_0000155096" description="Acetyl-CoA decarbonylase/synthase complex subunit epsilon 2">
    <location>
        <begin position="1"/>
        <end position="170"/>
    </location>
</feature>
<feature type="helix" evidence="4">
    <location>
        <begin position="24"/>
        <end position="32"/>
    </location>
</feature>
<feature type="strand" evidence="4">
    <location>
        <begin position="35"/>
        <end position="41"/>
    </location>
</feature>
<feature type="helix" evidence="4">
    <location>
        <begin position="43"/>
        <end position="46"/>
    </location>
</feature>
<feature type="helix" evidence="4">
    <location>
        <begin position="48"/>
        <end position="60"/>
    </location>
</feature>
<feature type="strand" evidence="4">
    <location>
        <begin position="65"/>
        <end position="67"/>
    </location>
</feature>
<feature type="helix" evidence="4">
    <location>
        <begin position="72"/>
        <end position="76"/>
    </location>
</feature>
<feature type="strand" evidence="5">
    <location>
        <begin position="82"/>
        <end position="84"/>
    </location>
</feature>
<feature type="helix" evidence="4">
    <location>
        <begin position="87"/>
        <end position="94"/>
    </location>
</feature>
<feature type="strand" evidence="4">
    <location>
        <begin position="102"/>
        <end position="105"/>
    </location>
</feature>
<feature type="strand" evidence="4">
    <location>
        <begin position="109"/>
        <end position="115"/>
    </location>
</feature>
<feature type="helix" evidence="4">
    <location>
        <begin position="118"/>
        <end position="130"/>
    </location>
</feature>
<feature type="strand" evidence="4">
    <location>
        <begin position="135"/>
        <end position="138"/>
    </location>
</feature>
<feature type="strand" evidence="4">
    <location>
        <begin position="140"/>
        <end position="142"/>
    </location>
</feature>
<feature type="strand" evidence="4">
    <location>
        <begin position="145"/>
        <end position="150"/>
    </location>
</feature>
<feature type="helix" evidence="4">
    <location>
        <begin position="156"/>
        <end position="168"/>
    </location>
</feature>
<sequence>MVDTTKNTKLFTSYGVKTSKAITTEVAAKLISKAKRPLFVVGTGVLDPELLDRAVKIAKAKNIPIAATGSSMPGFVDKDVNAKYINLHQLGFYLTDPDWPGLDGNGNYDTIILLGHKKYYINQVLSAVKNFSDVKSISIDRNYIQNATMSFGNLSKADHIAALDEVIDLL</sequence>
<accession>Q9C4Z3</accession>
<organism>
    <name type="scientific">Methanosarcina thermophila</name>
    <dbReference type="NCBI Taxonomy" id="2210"/>
    <lineage>
        <taxon>Archaea</taxon>
        <taxon>Methanobacteriati</taxon>
        <taxon>Methanobacteriota</taxon>
        <taxon>Stenosarchaea group</taxon>
        <taxon>Methanomicrobia</taxon>
        <taxon>Methanosarcinales</taxon>
        <taxon>Methanosarcinaceae</taxon>
        <taxon>Methanosarcina</taxon>
    </lineage>
</organism>
<comment type="function">
    <text evidence="1">Part of a complex that catalyzes the reversible cleavage of acetyl-CoA, allowing growth on acetate as sole source of carbon and energy. The alpha-epsilon subcomponent functions as a carbon monoxide dehydrogenase. The precise role of the epsilon subunit is unclear; it may have a stabilizing role within the alpha(2)epsilon(2) component and/or be involved in electron transfer to FAD during a potential FAD-mediated CO oxidation.</text>
</comment>
<comment type="pathway">
    <text evidence="1">One-carbon metabolism; methanogenesis from acetate.</text>
</comment>
<comment type="subunit">
    <text evidence="1 2 3">Heterotetramer of two alpha and two epsilon subunits (PubMed:10600570, PubMed:12657792). The ACDS complex is made up of alpha, epsilon, beta, gamma and delta subunits with a probable stoichiometry of (alpha(2)epsilon(2))(4)-beta(8)-(gamma(1)delta(1))(8) (By similarity).</text>
</comment>
<comment type="similarity">
    <text evidence="1">Belongs to the CdhB family.</text>
</comment>
<keyword id="KW-0002">3D-structure</keyword>
<keyword id="KW-0484">Methanogenesis</keyword>